<evidence type="ECO:0000255" key="1">
    <source>
        <dbReference type="HAMAP-Rule" id="MF_01863"/>
    </source>
</evidence>
<evidence type="ECO:0000256" key="2">
    <source>
        <dbReference type="SAM" id="MobiDB-lite"/>
    </source>
</evidence>
<organism>
    <name type="scientific">Staphylococcus aureus (strain bovine RF122 / ET3-1)</name>
    <dbReference type="NCBI Taxonomy" id="273036"/>
    <lineage>
        <taxon>Bacteria</taxon>
        <taxon>Bacillati</taxon>
        <taxon>Bacillota</taxon>
        <taxon>Bacilli</taxon>
        <taxon>Bacillales</taxon>
        <taxon>Staphylococcaceae</taxon>
        <taxon>Staphylococcus</taxon>
    </lineage>
</organism>
<sequence length="113" mass="13536">MKNTFLICDECQAVNIRTLQKKLEKLDPDAEIVIGCQSYCGPGRRKTFTFVNNRPLAALTEEELIEKVSQQLKKPRDPEEEERLRKRHEERKRRKEEQDRKLKEKLEKRKAQQ</sequence>
<accession>Q2YS71</accession>
<dbReference type="EMBL" id="AJ938182">
    <property type="protein sequence ID" value="CAI80231.1"/>
    <property type="molecule type" value="Genomic_DNA"/>
</dbReference>
<dbReference type="RefSeq" id="WP_000798967.1">
    <property type="nucleotide sequence ID" value="NC_007622.1"/>
</dbReference>
<dbReference type="SMR" id="Q2YS71"/>
<dbReference type="KEGG" id="sab:SAB0543"/>
<dbReference type="HOGENOM" id="CLU_2156795_0_0_9"/>
<dbReference type="HAMAP" id="MF_01863">
    <property type="entry name" value="UPF0741"/>
    <property type="match status" value="1"/>
</dbReference>
<dbReference type="InterPro" id="IPR009910">
    <property type="entry name" value="DUF1450"/>
</dbReference>
<dbReference type="InterPro" id="IPR020880">
    <property type="entry name" value="UPF0741"/>
</dbReference>
<dbReference type="Pfam" id="PF07293">
    <property type="entry name" value="DUF1450"/>
    <property type="match status" value="1"/>
</dbReference>
<protein>
    <recommendedName>
        <fullName evidence="1">UPF0741 protein SAB0543</fullName>
    </recommendedName>
</protein>
<name>Y543_STAAB</name>
<gene>
    <name type="ordered locus">SAB0543</name>
</gene>
<comment type="similarity">
    <text evidence="1">Belongs to the UPF0741 family.</text>
</comment>
<proteinExistence type="inferred from homology"/>
<reference key="1">
    <citation type="journal article" date="2007" name="PLoS ONE">
        <title>Molecular correlates of host specialization in Staphylococcus aureus.</title>
        <authorList>
            <person name="Herron-Olson L."/>
            <person name="Fitzgerald J.R."/>
            <person name="Musser J.M."/>
            <person name="Kapur V."/>
        </authorList>
    </citation>
    <scope>NUCLEOTIDE SEQUENCE [LARGE SCALE GENOMIC DNA]</scope>
    <source>
        <strain>bovine RF122 / ET3-1</strain>
    </source>
</reference>
<feature type="chain" id="PRO_0000372745" description="UPF0741 protein SAB0543">
    <location>
        <begin position="1"/>
        <end position="113"/>
    </location>
</feature>
<feature type="region of interest" description="Disordered" evidence="2">
    <location>
        <begin position="68"/>
        <end position="113"/>
    </location>
</feature>
<feature type="coiled-coil region" evidence="1">
    <location>
        <begin position="78"/>
        <end position="113"/>
    </location>
</feature>
<feature type="compositionally biased region" description="Basic residues" evidence="2">
    <location>
        <begin position="85"/>
        <end position="94"/>
    </location>
</feature>
<feature type="compositionally biased region" description="Basic and acidic residues" evidence="2">
    <location>
        <begin position="95"/>
        <end position="113"/>
    </location>
</feature>
<keyword id="KW-0175">Coiled coil</keyword>